<organism>
    <name type="scientific">Drosophila melanogaster</name>
    <name type="common">Fruit fly</name>
    <dbReference type="NCBI Taxonomy" id="7227"/>
    <lineage>
        <taxon>Eukaryota</taxon>
        <taxon>Metazoa</taxon>
        <taxon>Ecdysozoa</taxon>
        <taxon>Arthropoda</taxon>
        <taxon>Hexapoda</taxon>
        <taxon>Insecta</taxon>
        <taxon>Pterygota</taxon>
        <taxon>Neoptera</taxon>
        <taxon>Endopterygota</taxon>
        <taxon>Diptera</taxon>
        <taxon>Brachycera</taxon>
        <taxon>Muscomorpha</taxon>
        <taxon>Ephydroidea</taxon>
        <taxon>Drosophilidae</taxon>
        <taxon>Drosophila</taxon>
        <taxon>Sophophora</taxon>
    </lineage>
</organism>
<dbReference type="EC" id="3.4.17.22" evidence="4 5 10 12"/>
<dbReference type="EMBL" id="AF545816">
    <property type="protein sequence ID" value="AAN73045.1"/>
    <property type="molecule type" value="mRNA"/>
</dbReference>
<dbReference type="EMBL" id="AF545817">
    <property type="protein sequence ID" value="AAN73046.1"/>
    <property type="molecule type" value="mRNA"/>
</dbReference>
<dbReference type="EMBL" id="AF545818">
    <property type="protein sequence ID" value="AAN73047.1"/>
    <property type="molecule type" value="mRNA"/>
</dbReference>
<dbReference type="EMBL" id="AF545819">
    <property type="protein sequence ID" value="AAN73048.1"/>
    <property type="molecule type" value="mRNA"/>
</dbReference>
<dbReference type="EMBL" id="AF545820">
    <property type="protein sequence ID" value="AAN73049.1"/>
    <property type="molecule type" value="mRNA"/>
</dbReference>
<dbReference type="EMBL" id="AE014298">
    <property type="protein sequence ID" value="AAF45514.2"/>
    <property type="molecule type" value="Genomic_DNA"/>
</dbReference>
<dbReference type="EMBL" id="AE014298">
    <property type="protein sequence ID" value="AAF45515.4"/>
    <property type="molecule type" value="Genomic_DNA"/>
</dbReference>
<dbReference type="EMBL" id="AE014298">
    <property type="protein sequence ID" value="AAO41630.2"/>
    <property type="molecule type" value="Genomic_DNA"/>
</dbReference>
<dbReference type="EMBL" id="AE014298">
    <property type="protein sequence ID" value="AAS65237.1"/>
    <property type="molecule type" value="Genomic_DNA"/>
</dbReference>
<dbReference type="EMBL" id="AE014298">
    <property type="protein sequence ID" value="AAS65238.1"/>
    <property type="molecule type" value="Genomic_DNA"/>
</dbReference>
<dbReference type="EMBL" id="AE014298">
    <property type="protein sequence ID" value="AAS65239.1"/>
    <property type="molecule type" value="Genomic_DNA"/>
</dbReference>
<dbReference type="EMBL" id="AE014298">
    <property type="protein sequence ID" value="AAS65240.1"/>
    <property type="molecule type" value="Genomic_DNA"/>
</dbReference>
<dbReference type="EMBL" id="AE014298">
    <property type="protein sequence ID" value="ACL82874.1"/>
    <property type="molecule type" value="Genomic_DNA"/>
</dbReference>
<dbReference type="EMBL" id="AE014298">
    <property type="protein sequence ID" value="AHN59214.1"/>
    <property type="molecule type" value="Genomic_DNA"/>
</dbReference>
<dbReference type="EMBL" id="AL009147">
    <property type="protein sequence ID" value="CAA15634.1"/>
    <property type="molecule type" value="Genomic_DNA"/>
</dbReference>
<dbReference type="EMBL" id="AL009147">
    <property type="protein sequence ID" value="CAA15635.1"/>
    <property type="molecule type" value="Genomic_DNA"/>
</dbReference>
<dbReference type="EMBL" id="BT029935">
    <property type="protein sequence ID" value="ABM92809.1"/>
    <property type="molecule type" value="mRNA"/>
</dbReference>
<dbReference type="EMBL" id="BT099720">
    <property type="protein sequence ID" value="ACV53084.1"/>
    <property type="molecule type" value="mRNA"/>
</dbReference>
<dbReference type="EMBL" id="BT100053">
    <property type="protein sequence ID" value="ACX61594.1"/>
    <property type="molecule type" value="mRNA"/>
</dbReference>
<dbReference type="EMBL" id="BT100310">
    <property type="protein sequence ID" value="ACZ52622.1"/>
    <property type="molecule type" value="mRNA"/>
</dbReference>
<dbReference type="EMBL" id="U29591">
    <property type="protein sequence ID" value="AAA91650.1"/>
    <property type="status" value="ALT_FRAME"/>
    <property type="molecule type" value="mRNA"/>
</dbReference>
<dbReference type="EMBL" id="U29592">
    <property type="protein sequence ID" value="AAA91651.1"/>
    <property type="molecule type" value="mRNA"/>
</dbReference>
<dbReference type="EMBL" id="U03883">
    <property type="protein sequence ID" value="AAC46486.1"/>
    <property type="status" value="ALT_SEQ"/>
    <property type="molecule type" value="Genomic_DNA"/>
</dbReference>
<dbReference type="PIR" id="T13284">
    <property type="entry name" value="T13284"/>
</dbReference>
<dbReference type="PIR" id="T13420">
    <property type="entry name" value="T13420"/>
</dbReference>
<dbReference type="PIR" id="T13421">
    <property type="entry name" value="T13421"/>
</dbReference>
<dbReference type="RefSeq" id="NP_001138141.1">
    <molecule id="P42787-8"/>
    <property type="nucleotide sequence ID" value="NM_001144669.2"/>
</dbReference>
<dbReference type="RefSeq" id="NP_001284742.1">
    <molecule id="P42787-6"/>
    <property type="nucleotide sequence ID" value="NM_001297813.1"/>
</dbReference>
<dbReference type="RefSeq" id="NP_001284743.1">
    <molecule id="P42787-7"/>
    <property type="nucleotide sequence ID" value="NM_001297814.1"/>
</dbReference>
<dbReference type="RefSeq" id="NP_001284744.1">
    <molecule id="P42787-5"/>
    <property type="nucleotide sequence ID" value="NM_001297815.1"/>
</dbReference>
<dbReference type="RefSeq" id="NP_525032.2">
    <molecule id="P42787-1"/>
    <property type="nucleotide sequence ID" value="NM_080293.4"/>
</dbReference>
<dbReference type="RefSeq" id="NP_726675.3">
    <molecule id="P42787-4"/>
    <property type="nucleotide sequence ID" value="NM_166846.5"/>
</dbReference>
<dbReference type="RefSeq" id="NP_788852.2">
    <molecule id="P42787-1"/>
    <property type="nucleotide sequence ID" value="NM_176679.3"/>
</dbReference>
<dbReference type="RefSeq" id="NP_996319.1">
    <molecule id="P42787-5"/>
    <property type="nucleotide sequence ID" value="NM_206596.2"/>
</dbReference>
<dbReference type="RefSeq" id="NP_996320.1">
    <molecule id="P42787-7"/>
    <property type="nucleotide sequence ID" value="NM_206597.2"/>
</dbReference>
<dbReference type="RefSeq" id="NP_996321.1">
    <molecule id="P42787-6"/>
    <property type="nucleotide sequence ID" value="NM_206598.3"/>
</dbReference>
<dbReference type="RefSeq" id="NP_996322.1">
    <molecule id="P42787-3"/>
    <property type="nucleotide sequence ID" value="NM_206599.2"/>
</dbReference>
<dbReference type="PDB" id="3MN8">
    <property type="method" value="X-ray"/>
    <property type="resolution" value="2.70 A"/>
    <property type="chains" value="A/B/C/D=1-425"/>
</dbReference>
<dbReference type="PDBsum" id="3MN8"/>
<dbReference type="SMR" id="P42787"/>
<dbReference type="BioGRID" id="57568">
    <property type="interactions" value="3"/>
</dbReference>
<dbReference type="FunCoup" id="P42787">
    <property type="interactions" value="797"/>
</dbReference>
<dbReference type="IntAct" id="P42787">
    <property type="interactions" value="2"/>
</dbReference>
<dbReference type="STRING" id="7227.FBpp0089126"/>
<dbReference type="MEROPS" id="M14.037"/>
<dbReference type="MEROPS" id="M14.A20"/>
<dbReference type="GlyCosmos" id="P42787">
    <property type="glycosylation" value="11 sites, No reported glycans"/>
</dbReference>
<dbReference type="GlyGen" id="P42787">
    <property type="glycosylation" value="11 sites"/>
</dbReference>
<dbReference type="iPTMnet" id="P42787"/>
<dbReference type="PaxDb" id="7227-FBpp0089126"/>
<dbReference type="DNASU" id="30998"/>
<dbReference type="EnsemblMetazoa" id="FBtr0070081">
    <molecule id="P42787-1"/>
    <property type="protein sequence ID" value="FBpp0070080"/>
    <property type="gene ID" value="FBgn0004648"/>
</dbReference>
<dbReference type="EnsemblMetazoa" id="FBtr0070084">
    <molecule id="P42787-3"/>
    <property type="protein sequence ID" value="FBpp0089123"/>
    <property type="gene ID" value="FBgn0004648"/>
</dbReference>
<dbReference type="EnsemblMetazoa" id="FBtr0070085">
    <molecule id="P42787-6"/>
    <property type="protein sequence ID" value="FBpp0089124"/>
    <property type="gene ID" value="FBgn0004648"/>
</dbReference>
<dbReference type="EnsemblMetazoa" id="FBtr0070086">
    <molecule id="P42787-7"/>
    <property type="protein sequence ID" value="FBpp0089125"/>
    <property type="gene ID" value="FBgn0004648"/>
</dbReference>
<dbReference type="EnsemblMetazoa" id="FBtr0070087">
    <molecule id="P42787-5"/>
    <property type="protein sequence ID" value="FBpp0089126"/>
    <property type="gene ID" value="FBgn0004648"/>
</dbReference>
<dbReference type="EnsemblMetazoa" id="FBtr0290016">
    <molecule id="P42787-4"/>
    <property type="protein sequence ID" value="FBpp0288455"/>
    <property type="gene ID" value="FBgn0004648"/>
</dbReference>
<dbReference type="EnsemblMetazoa" id="FBtr0290017">
    <molecule id="P42787-8"/>
    <property type="protein sequence ID" value="FBpp0288456"/>
    <property type="gene ID" value="FBgn0004648"/>
</dbReference>
<dbReference type="EnsemblMetazoa" id="FBtr0340146">
    <molecule id="P42787-6"/>
    <property type="protein sequence ID" value="FBpp0309132"/>
    <property type="gene ID" value="FBgn0004648"/>
</dbReference>
<dbReference type="EnsemblMetazoa" id="FBtr0344737">
    <molecule id="P42787-7"/>
    <property type="protein sequence ID" value="FBpp0311069"/>
    <property type="gene ID" value="FBgn0004648"/>
</dbReference>
<dbReference type="EnsemblMetazoa" id="FBtr0344738">
    <molecule id="P42787-1"/>
    <property type="protein sequence ID" value="FBpp0311070"/>
    <property type="gene ID" value="FBgn0004648"/>
</dbReference>
<dbReference type="EnsemblMetazoa" id="FBtr0344739">
    <molecule id="P42787-5"/>
    <property type="protein sequence ID" value="FBpp0311071"/>
    <property type="gene ID" value="FBgn0004648"/>
</dbReference>
<dbReference type="GeneID" id="30998"/>
<dbReference type="KEGG" id="dme:Dmel_CG4122"/>
<dbReference type="AGR" id="FB:FBgn0004648"/>
<dbReference type="CTD" id="30998"/>
<dbReference type="FlyBase" id="FBgn0004648">
    <property type="gene designation" value="svr"/>
</dbReference>
<dbReference type="VEuPathDB" id="VectorBase:FBgn0004648"/>
<dbReference type="eggNOG" id="KOG2649">
    <property type="taxonomic scope" value="Eukaryota"/>
</dbReference>
<dbReference type="GeneTree" id="ENSGT00940000156919"/>
<dbReference type="InParanoid" id="P42787"/>
<dbReference type="OMA" id="CCKYPPG"/>
<dbReference type="OrthoDB" id="10249045at2759"/>
<dbReference type="PhylomeDB" id="P42787"/>
<dbReference type="BRENDA" id="3.4.17.22">
    <property type="organism ID" value="1994"/>
</dbReference>
<dbReference type="Reactome" id="R-DME-432722">
    <property type="pathway name" value="Golgi Associated Vesicle Biogenesis"/>
</dbReference>
<dbReference type="SignaLink" id="P42787"/>
<dbReference type="BioGRID-ORCS" id="30998">
    <property type="hits" value="0 hits in 3 CRISPR screens"/>
</dbReference>
<dbReference type="ChiTaRS" id="svr">
    <property type="organism name" value="fly"/>
</dbReference>
<dbReference type="EvolutionaryTrace" id="P42787"/>
<dbReference type="GenomeRNAi" id="30998"/>
<dbReference type="PRO" id="PR:P42787"/>
<dbReference type="Proteomes" id="UP000000803">
    <property type="component" value="Chromosome X"/>
</dbReference>
<dbReference type="Bgee" id="FBgn0004648">
    <property type="expression patterns" value="Expressed in adult middle midgut class I enteroendocrine cell in adult midgut (Drosophila) and 271 other cell types or tissues"/>
</dbReference>
<dbReference type="ExpressionAtlas" id="P42787">
    <property type="expression patterns" value="baseline and differential"/>
</dbReference>
<dbReference type="GO" id="GO:0012505">
    <property type="term" value="C:endomembrane system"/>
    <property type="evidence" value="ECO:0007005"/>
    <property type="project" value="FlyBase"/>
</dbReference>
<dbReference type="GO" id="GO:0005576">
    <property type="term" value="C:extracellular region"/>
    <property type="evidence" value="ECO:0007005"/>
    <property type="project" value="FlyBase"/>
</dbReference>
<dbReference type="GO" id="GO:0005615">
    <property type="term" value="C:extracellular space"/>
    <property type="evidence" value="ECO:0000318"/>
    <property type="project" value="GO_Central"/>
</dbReference>
<dbReference type="GO" id="GO:0005794">
    <property type="term" value="C:Golgi apparatus"/>
    <property type="evidence" value="ECO:0007669"/>
    <property type="project" value="UniProtKB-SubCell"/>
</dbReference>
<dbReference type="GO" id="GO:0016020">
    <property type="term" value="C:membrane"/>
    <property type="evidence" value="ECO:0007669"/>
    <property type="project" value="UniProtKB-SubCell"/>
</dbReference>
<dbReference type="GO" id="GO:0048471">
    <property type="term" value="C:perinuclear region of cytoplasm"/>
    <property type="evidence" value="ECO:0000314"/>
    <property type="project" value="FlyBase"/>
</dbReference>
<dbReference type="GO" id="GO:0004180">
    <property type="term" value="F:carboxypeptidase activity"/>
    <property type="evidence" value="ECO:0000314"/>
    <property type="project" value="FlyBase"/>
</dbReference>
<dbReference type="GO" id="GO:0004181">
    <property type="term" value="F:metallocarboxypeptidase activity"/>
    <property type="evidence" value="ECO:0000314"/>
    <property type="project" value="UniProtKB"/>
</dbReference>
<dbReference type="GO" id="GO:0042302">
    <property type="term" value="F:structural constituent of cuticle"/>
    <property type="evidence" value="ECO:0007669"/>
    <property type="project" value="UniProtKB-KW"/>
</dbReference>
<dbReference type="GO" id="GO:0008270">
    <property type="term" value="F:zinc ion binding"/>
    <property type="evidence" value="ECO:0000314"/>
    <property type="project" value="UniProtKB"/>
</dbReference>
<dbReference type="GO" id="GO:0007476">
    <property type="term" value="P:imaginal disc-derived wing morphogenesis"/>
    <property type="evidence" value="ECO:0000315"/>
    <property type="project" value="FlyBase"/>
</dbReference>
<dbReference type="GO" id="GO:0007616">
    <property type="term" value="P:long-term memory"/>
    <property type="evidence" value="ECO:0000315"/>
    <property type="project" value="FlyBase"/>
</dbReference>
<dbReference type="GO" id="GO:0001933">
    <property type="term" value="P:negative regulation of protein phosphorylation"/>
    <property type="evidence" value="ECO:0000315"/>
    <property type="project" value="UniProtKB"/>
</dbReference>
<dbReference type="GO" id="GO:0061837">
    <property type="term" value="P:neuropeptide processing"/>
    <property type="evidence" value="ECO:0000315"/>
    <property type="project" value="FlyBase"/>
</dbReference>
<dbReference type="GO" id="GO:0006518">
    <property type="term" value="P:peptide metabolic process"/>
    <property type="evidence" value="ECO:0000318"/>
    <property type="project" value="GO_Central"/>
</dbReference>
<dbReference type="GO" id="GO:0030838">
    <property type="term" value="P:positive regulation of actin filament polymerization"/>
    <property type="evidence" value="ECO:0000315"/>
    <property type="project" value="UniProtKB"/>
</dbReference>
<dbReference type="GO" id="GO:0016485">
    <property type="term" value="P:protein processing"/>
    <property type="evidence" value="ECO:0000318"/>
    <property type="project" value="GO_Central"/>
</dbReference>
<dbReference type="CDD" id="cd03858">
    <property type="entry name" value="M14_CP_N-E_like"/>
    <property type="match status" value="1"/>
</dbReference>
<dbReference type="CDD" id="cd03868">
    <property type="entry name" value="M14_CPD_I"/>
    <property type="match status" value="1"/>
</dbReference>
<dbReference type="CDD" id="cd11308">
    <property type="entry name" value="Peptidase_M14NE-CP-C_like"/>
    <property type="match status" value="2"/>
</dbReference>
<dbReference type="FunFam" id="3.40.630.10:FF:000106">
    <property type="entry name" value="Carboxypeptidase A"/>
    <property type="match status" value="1"/>
</dbReference>
<dbReference type="FunFam" id="2.60.40.1120:FF:000016">
    <property type="entry name" value="carboxypeptidase D isoform X2"/>
    <property type="match status" value="1"/>
</dbReference>
<dbReference type="FunFam" id="2.60.40.1120:FF:000020">
    <property type="entry name" value="Silver, isoform N"/>
    <property type="match status" value="1"/>
</dbReference>
<dbReference type="FunFam" id="3.40.630.10:FF:000104">
    <property type="entry name" value="Silver, isoform N"/>
    <property type="match status" value="1"/>
</dbReference>
<dbReference type="Gene3D" id="2.60.40.1120">
    <property type="entry name" value="Carboxypeptidase-like, regulatory domain"/>
    <property type="match status" value="4"/>
</dbReference>
<dbReference type="Gene3D" id="3.40.630.10">
    <property type="entry name" value="Zn peptidases"/>
    <property type="match status" value="4"/>
</dbReference>
<dbReference type="InterPro" id="IPR008969">
    <property type="entry name" value="CarboxyPept-like_regulatory"/>
</dbReference>
<dbReference type="InterPro" id="IPR000834">
    <property type="entry name" value="Peptidase_M14"/>
</dbReference>
<dbReference type="InterPro" id="IPR050753">
    <property type="entry name" value="Peptidase_M14_domain"/>
</dbReference>
<dbReference type="PANTHER" id="PTHR11532:SF62">
    <property type="entry name" value="CARBOXYPEPTIDASE D"/>
    <property type="match status" value="1"/>
</dbReference>
<dbReference type="PANTHER" id="PTHR11532">
    <property type="entry name" value="PROTEASE M14 CARBOXYPEPTIDASE"/>
    <property type="match status" value="1"/>
</dbReference>
<dbReference type="Pfam" id="PF13620">
    <property type="entry name" value="CarboxypepD_reg"/>
    <property type="match status" value="2"/>
</dbReference>
<dbReference type="Pfam" id="PF00246">
    <property type="entry name" value="Peptidase_M14"/>
    <property type="match status" value="2"/>
</dbReference>
<dbReference type="PRINTS" id="PR00765">
    <property type="entry name" value="CRBOXYPTASEA"/>
</dbReference>
<dbReference type="SMART" id="SM00631">
    <property type="entry name" value="Zn_pept"/>
    <property type="match status" value="2"/>
</dbReference>
<dbReference type="SUPFAM" id="SSF49464">
    <property type="entry name" value="Carboxypeptidase regulatory domain-like"/>
    <property type="match status" value="4"/>
</dbReference>
<dbReference type="SUPFAM" id="SSF53187">
    <property type="entry name" value="Zn-dependent exopeptidases"/>
    <property type="match status" value="3"/>
</dbReference>
<dbReference type="PROSITE" id="PS00132">
    <property type="entry name" value="CARBOXYPEPT_ZN_1"/>
    <property type="match status" value="2"/>
</dbReference>
<dbReference type="PROSITE" id="PS00133">
    <property type="entry name" value="CARBOXYPEPT_ZN_2"/>
    <property type="match status" value="2"/>
</dbReference>
<dbReference type="PROSITE" id="PS52035">
    <property type="entry name" value="PEPTIDASE_M14"/>
    <property type="match status" value="3"/>
</dbReference>
<feature type="signal peptide" evidence="1">
    <location>
        <begin position="1"/>
        <end position="25"/>
    </location>
</feature>
<feature type="chain" id="PRO_0000004405" description="Carboxypeptidase D">
    <location>
        <begin position="26"/>
        <end position="1406"/>
    </location>
</feature>
<feature type="topological domain" description="Extracellular" evidence="1">
    <location>
        <begin position="26"/>
        <end position="1312"/>
    </location>
</feature>
<feature type="transmembrane region" description="Helical" evidence="1">
    <location>
        <begin position="1313"/>
        <end position="1333"/>
    </location>
</feature>
<feature type="topological domain" description="Cytoplasmic" evidence="1">
    <location>
        <begin position="1334"/>
        <end position="1406"/>
    </location>
</feature>
<feature type="domain" description="Peptidase M14 1" evidence="3 5 9">
    <location>
        <begin position="39"/>
        <end position="335"/>
    </location>
</feature>
<feature type="domain" description="Peptidase M14 2" evidence="3 5 9">
    <location>
        <begin position="455"/>
        <end position="760"/>
    </location>
</feature>
<feature type="domain" description="Peptidase M14 3" evidence="3 5 9">
    <location>
        <begin position="863"/>
        <end position="1121"/>
    </location>
</feature>
<feature type="short sequence motif" description="Cell attachment site" evidence="1">
    <location>
        <begin position="1343"/>
        <end position="1345"/>
    </location>
</feature>
<feature type="active site" description="Proton donor/acceptor" evidence="3">
    <location>
        <position position="305"/>
    </location>
</feature>
<feature type="active site" description="Proton donor/acceptor" evidence="3">
    <location>
        <position position="730"/>
    </location>
</feature>
<feature type="binding site" evidence="3 10 21">
    <location>
        <position position="101"/>
    </location>
    <ligand>
        <name>Zn(2+)</name>
        <dbReference type="ChEBI" id="CHEBI:29105"/>
        <label>1</label>
        <note>catalytic</note>
    </ligand>
</feature>
<feature type="binding site" evidence="3 10 21">
    <location>
        <position position="104"/>
    </location>
    <ligand>
        <name>Zn(2+)</name>
        <dbReference type="ChEBI" id="CHEBI:29105"/>
        <label>1</label>
        <note>catalytic</note>
    </ligand>
</feature>
<feature type="binding site" evidence="3 10 21">
    <location>
        <position position="217"/>
    </location>
    <ligand>
        <name>Zn(2+)</name>
        <dbReference type="ChEBI" id="CHEBI:29105"/>
        <label>1</label>
        <note>catalytic</note>
    </ligand>
</feature>
<feature type="binding site" evidence="3">
    <location>
        <position position="517"/>
    </location>
    <ligand>
        <name>Zn(2+)</name>
        <dbReference type="ChEBI" id="CHEBI:29105"/>
        <label>2</label>
        <note>catalytic</note>
    </ligand>
</feature>
<feature type="binding site" evidence="3">
    <location>
        <position position="520"/>
    </location>
    <ligand>
        <name>Zn(2+)</name>
        <dbReference type="ChEBI" id="CHEBI:29105"/>
        <label>2</label>
        <note>catalytic</note>
    </ligand>
</feature>
<feature type="binding site" evidence="3">
    <location>
        <position position="626"/>
    </location>
    <ligand>
        <name>Zn(2+)</name>
        <dbReference type="ChEBI" id="CHEBI:29105"/>
        <label>2</label>
        <note>catalytic</note>
    </ligand>
</feature>
<feature type="modified residue" description="Phosphoserine" evidence="8">
    <location>
        <position position="1380"/>
    </location>
</feature>
<feature type="glycosylation site" description="N-linked (GlcNAc...) asparagine" evidence="2 10 21">
    <location>
        <position position="133"/>
    </location>
</feature>
<feature type="glycosylation site" description="N-linked (GlcNAc...) asparagine" evidence="2">
    <location>
        <position position="269"/>
    </location>
</feature>
<feature type="glycosylation site" description="N-linked (GlcNAc...) asparagine" evidence="2">
    <location>
        <position position="458"/>
    </location>
</feature>
<feature type="glycosylation site" description="N-linked (GlcNAc...) asparagine" evidence="2">
    <location>
        <position position="549"/>
    </location>
</feature>
<feature type="glycosylation site" description="N-linked (GlcNAc...) asparagine" evidence="2">
    <location>
        <position position="612"/>
    </location>
</feature>
<feature type="glycosylation site" description="N-linked (GlcNAc...) asparagine" evidence="2">
    <location>
        <position position="652"/>
    </location>
</feature>
<feature type="glycosylation site" description="N-linked (GlcNAc...) asparagine" evidence="2">
    <location>
        <position position="787"/>
    </location>
</feature>
<feature type="glycosylation site" description="N-linked (GlcNAc...) asparagine" evidence="2">
    <location>
        <position position="808"/>
    </location>
</feature>
<feature type="glycosylation site" description="N-linked (GlcNAc...) asparagine" evidence="2">
    <location>
        <position position="981"/>
    </location>
</feature>
<feature type="glycosylation site" description="N-linked (GlcNAc...) asparagine" evidence="2">
    <location>
        <position position="1152"/>
    </location>
</feature>
<feature type="glycosylation site" description="N-linked (GlcNAc...) asparagine" evidence="2 7">
    <location>
        <position position="1251"/>
    </location>
</feature>
<feature type="disulfide bond" evidence="10 21">
    <location>
        <begin position="156"/>
        <end position="309"/>
    </location>
</feature>
<feature type="disulfide bond" evidence="10 21">
    <location>
        <begin position="236"/>
        <end position="237"/>
    </location>
</feature>
<feature type="disulfide bond" evidence="10 21">
    <location>
        <begin position="268"/>
        <end position="308"/>
    </location>
</feature>
<feature type="splice variant" id="VSP_000773" description="In isoform 3, isoform 4 and isoform 6." evidence="14">
    <original>MPTLGLLFASIGIAVLAMGVPHCRGYTIKEDESFLQQPHYASQEQLEDLFAGLEKAYPNQAKVHFLGRSLEGRNLLALQISRNTRSRNLLTPPVKYIANMHGDETVGRQLLVYMAQYLLGNHERISDLGQLVNSTDIYLVPTMNPDGYALSQ</original>
    <variation>MLFFCLALIIGCAVGEYSEVRVIQEEDNFLESPHYLKNEEIGDLFSQLAKDYPDLAQTYTIGKSLEDRPIYALALSAPTGESKNGDLLRPMVKLVANIQGDEAVGRQMVLYMAEYLATHYDGDPKVQALLNLTEIHFLPTCNPDGFAKAK</variation>
    <location>
        <begin position="1"/>
        <end position="152"/>
    </location>
</feature>
<feature type="splice variant" id="VSP_037495" description="In isoform 2 and isoform 8." evidence="16">
    <original>PTLGLLFASIGIAVLAMGVPHCRGYTIKEDESFLQQPHYASQEQLEDLFAGLEKAYPNQAKVHFLGRSLEGRNLLALQISRNTRSRNLLTPPVKYIANMHGDETVGRQLLVYMAQYLLGNHERISDLGQLVNSTDIYLVPTMNPDGYALSQ</original>
    <variation>NTCL</variation>
    <location>
        <begin position="2"/>
        <end position="152"/>
    </location>
</feature>
<feature type="splice variant" id="VSP_000775" description="In isoform 6 and isoform 7." evidence="14">
    <original>NFRKVKVERS</original>
    <variation>ISSFYSPYYF</variation>
    <location>
        <begin position="426"/>
        <end position="435"/>
    </location>
</feature>
<feature type="splice variant" id="VSP_000776" description="In isoform 6 and isoform 7." evidence="14">
    <location>
        <begin position="436"/>
        <end position="1406"/>
    </location>
</feature>
<feature type="splice variant" id="VSP_000779" description="In isoform 4, isoform 5 and isoform 8." evidence="14 16">
    <original>ELSQRAHLVNNQTNYSFIIQAA</original>
    <variation>GMTIQPYFDEEQLERILHTDDDDDDGPHMEPELDVADDSEDDIVMLHNNGNKRRH</variation>
    <location>
        <begin position="1385"/>
        <end position="1406"/>
    </location>
</feature>
<feature type="mutagenesis site" description="In svr-poi; Adult wings are smaller, pointed and have shortened veins. Displays decreased cold sensitivity and fails to suppress courtship with previously mated females indicating deficits in long-term memory." evidence="5 9">
    <original>AGIYSNAHPTMYLGQPCELFQNEFFPDGITNGAQWYSVTGGMQDWNYVRAGCLELTIEMGCDKFPKAAELSRYWEDHREPLLQFIEQVHCGIHGFVHSTIGTPIAGAVVRLDGANHSTYSQVFGDYWKLALPGRHNLTVLGDNYAPLRMEVEVPDVHPFEMRMDITLMPDDPQHWASANDFRIIENVVNTRYHTNPQVRARLAELENQNGQIASFGYADSEFGTIFNYLKMTSDIGEPEEHKYKLLVVSSLYDTTAPLGREILLNLIRHLVEGFKLQDTSVVELLKRSVIYFLPQTSKFQNVFDMYNSNTSICDPVLGDELAERILGPETDQAKDVFLQFLRSERFDLMLTFGAGNSDLNYPKGDSVLVKFAHRMQRTEFNYSPLQCPPSATRQLHRETTERLTNMMYRIYNLPVYTLGISCCRMPHQKKIASVWRKNIDKIKNFLALVKTGVSGLVQNDKGQPLREAYVRLLEHDRIINVTKNVARFQLMLPHGLYGLEVTAPNYESQMIKVDVEDGRVTELGIIRMHPFTLIRGVVLELPNNDNRATTSIAGVVLDESNHPVRNAKVSVVGQTQLRNFTGSMGQYRISAVPLGTITLKVEAPRHLEATRQMHLIQGGLATENVVFHLKVNEHVFGLPRFLFILCASVLIIVGVIVCVLCAQFWFYRRHRGDKPYYNFSLLPQRGKEQFGLEDDDGGDDGETELFRSPIKRELSQRAHLVNNQTNYSFIIQAA</original>
    <variation>FIMAK</variation>
    <location>
        <begin position="673"/>
        <end position="1406"/>
    </location>
</feature>
<feature type="mutagenesis site" description="In svr-1; Adult wings are pointed and have shortened veins. Displays decreased cold sensitivity and fails to suppress courtship with previously mated females indicating deficits in long-term memory." evidence="5 9">
    <location>
        <position position="803"/>
    </location>
</feature>
<feature type="sequence conflict" description="In Ref. 7; AAA91650." evidence="17" ref="7">
    <original>C</original>
    <variation>Y</variation>
    <location>
        <position position="733"/>
    </location>
</feature>
<feature type="sequence conflict" description="In Ref. 6; ABM92809 and 7; AAA91650." evidence="17" ref="6 7">
    <original>V</original>
    <variation>E</variation>
    <location>
        <position position="1041"/>
    </location>
</feature>
<feature type="helix" evidence="22">
    <location>
        <begin position="33"/>
        <end position="35"/>
    </location>
</feature>
<feature type="helix" evidence="22">
    <location>
        <begin position="43"/>
        <end position="56"/>
    </location>
</feature>
<feature type="turn" evidence="22">
    <location>
        <begin position="58"/>
        <end position="60"/>
    </location>
</feature>
<feature type="strand" evidence="22">
    <location>
        <begin position="61"/>
        <end position="68"/>
    </location>
</feature>
<feature type="strand" evidence="22">
    <location>
        <begin position="74"/>
        <end position="80"/>
    </location>
</feature>
<feature type="strand" evidence="22">
    <location>
        <begin position="93"/>
        <end position="97"/>
    </location>
</feature>
<feature type="helix" evidence="22">
    <location>
        <begin position="106"/>
        <end position="121"/>
    </location>
</feature>
<feature type="turn" evidence="22">
    <location>
        <begin position="122"/>
        <end position="124"/>
    </location>
</feature>
<feature type="helix" evidence="22">
    <location>
        <begin position="126"/>
        <end position="134"/>
    </location>
</feature>
<feature type="strand" evidence="22">
    <location>
        <begin position="136"/>
        <end position="141"/>
    </location>
</feature>
<feature type="helix" evidence="22">
    <location>
        <begin position="145"/>
        <end position="149"/>
    </location>
</feature>
<feature type="helix" evidence="22">
    <location>
        <begin position="160"/>
        <end position="162"/>
    </location>
</feature>
<feature type="turn" evidence="22">
    <location>
        <begin position="163"/>
        <end position="165"/>
    </location>
</feature>
<feature type="helix" evidence="22">
    <location>
        <begin position="173"/>
        <end position="175"/>
    </location>
</feature>
<feature type="helix" evidence="22">
    <location>
        <begin position="196"/>
        <end position="205"/>
    </location>
</feature>
<feature type="strand" evidence="22">
    <location>
        <begin position="212"/>
        <end position="217"/>
    </location>
</feature>
<feature type="strand" evidence="22">
    <location>
        <begin position="222"/>
        <end position="226"/>
    </location>
</feature>
<feature type="strand" evidence="22">
    <location>
        <begin position="235"/>
        <end position="237"/>
    </location>
</feature>
<feature type="helix" evidence="22">
    <location>
        <begin position="245"/>
        <end position="257"/>
    </location>
</feature>
<feature type="turn" evidence="22">
    <location>
        <begin position="260"/>
        <end position="264"/>
    </location>
</feature>
<feature type="helix" evidence="22">
    <location>
        <begin position="267"/>
        <end position="269"/>
    </location>
</feature>
<feature type="helix" evidence="22">
    <location>
        <begin position="273"/>
        <end position="275"/>
    </location>
</feature>
<feature type="strand" evidence="22">
    <location>
        <begin position="276"/>
        <end position="278"/>
    </location>
</feature>
<feature type="helix" evidence="22">
    <location>
        <begin position="279"/>
        <end position="282"/>
    </location>
</feature>
<feature type="helix" evidence="22">
    <location>
        <begin position="289"/>
        <end position="296"/>
    </location>
</feature>
<feature type="strand" evidence="22">
    <location>
        <begin position="300"/>
        <end position="305"/>
    </location>
</feature>
<feature type="strand" evidence="22">
    <location>
        <begin position="308"/>
        <end position="311"/>
    </location>
</feature>
<feature type="helix" evidence="22">
    <location>
        <begin position="314"/>
        <end position="316"/>
    </location>
</feature>
<feature type="helix" evidence="22">
    <location>
        <begin position="317"/>
        <end position="333"/>
    </location>
</feature>
<feature type="helix" evidence="22">
    <location>
        <begin position="334"/>
        <end position="336"/>
    </location>
</feature>
<feature type="strand" evidence="22">
    <location>
        <begin position="337"/>
        <end position="344"/>
    </location>
</feature>
<feature type="strand" evidence="22">
    <location>
        <begin position="346"/>
        <end position="348"/>
    </location>
</feature>
<feature type="strand" evidence="22">
    <location>
        <begin position="355"/>
        <end position="358"/>
    </location>
</feature>
<feature type="strand" evidence="22">
    <location>
        <begin position="373"/>
        <end position="376"/>
    </location>
</feature>
<feature type="strand" evidence="22">
    <location>
        <begin position="380"/>
        <end position="389"/>
    </location>
</feature>
<feature type="strand" evidence="22">
    <location>
        <begin position="398"/>
        <end position="402"/>
    </location>
</feature>
<feature type="strand" evidence="22">
    <location>
        <begin position="406"/>
        <end position="408"/>
    </location>
</feature>
<gene>
    <name evidence="15 20" type="primary">svr</name>
    <name evidence="14" type="synonym">CPD</name>
    <name type="synonym">CpepE</name>
    <name evidence="20" type="ORF">CG4122</name>
</gene>
<reference key="1">
    <citation type="journal article" date="2002" name="J. Biol. Chem.">
        <title>Characterization of Drosophila carboxypeptidase D.</title>
        <authorList>
            <person name="Sidyelyeva G."/>
            <person name="Fricker L.D."/>
        </authorList>
    </citation>
    <scope>NUCLEOTIDE SEQUENCE [MRNA] (ISOFORMS 1; 3; 5; 6 AND 7)</scope>
    <scope>FUNCTION</scope>
    <scope>CATALYTIC ACTIVITY</scope>
    <scope>BIOPHYSICOCHEMICAL PROPERTIES</scope>
    <scope>DOMAIN</scope>
    <source>
        <tissue>Embryo</tissue>
    </source>
</reference>
<reference key="2">
    <citation type="journal article" date="2000" name="Science">
        <title>The genome sequence of Drosophila melanogaster.</title>
        <authorList>
            <person name="Adams M.D."/>
            <person name="Celniker S.E."/>
            <person name="Holt R.A."/>
            <person name="Evans C.A."/>
            <person name="Gocayne J.D."/>
            <person name="Amanatides P.G."/>
            <person name="Scherer S.E."/>
            <person name="Li P.W."/>
            <person name="Hoskins R.A."/>
            <person name="Galle R.F."/>
            <person name="George R.A."/>
            <person name="Lewis S.E."/>
            <person name="Richards S."/>
            <person name="Ashburner M."/>
            <person name="Henderson S.N."/>
            <person name="Sutton G.G."/>
            <person name="Wortman J.R."/>
            <person name="Yandell M.D."/>
            <person name="Zhang Q."/>
            <person name="Chen L.X."/>
            <person name="Brandon R.C."/>
            <person name="Rogers Y.-H.C."/>
            <person name="Blazej R.G."/>
            <person name="Champe M."/>
            <person name="Pfeiffer B.D."/>
            <person name="Wan K.H."/>
            <person name="Doyle C."/>
            <person name="Baxter E.G."/>
            <person name="Helt G."/>
            <person name="Nelson C.R."/>
            <person name="Miklos G.L.G."/>
            <person name="Abril J.F."/>
            <person name="Agbayani A."/>
            <person name="An H.-J."/>
            <person name="Andrews-Pfannkoch C."/>
            <person name="Baldwin D."/>
            <person name="Ballew R.M."/>
            <person name="Basu A."/>
            <person name="Baxendale J."/>
            <person name="Bayraktaroglu L."/>
            <person name="Beasley E.M."/>
            <person name="Beeson K.Y."/>
            <person name="Benos P.V."/>
            <person name="Berman B.P."/>
            <person name="Bhandari D."/>
            <person name="Bolshakov S."/>
            <person name="Borkova D."/>
            <person name="Botchan M.R."/>
            <person name="Bouck J."/>
            <person name="Brokstein P."/>
            <person name="Brottier P."/>
            <person name="Burtis K.C."/>
            <person name="Busam D.A."/>
            <person name="Butler H."/>
            <person name="Cadieu E."/>
            <person name="Center A."/>
            <person name="Chandra I."/>
            <person name="Cherry J.M."/>
            <person name="Cawley S."/>
            <person name="Dahlke C."/>
            <person name="Davenport L.B."/>
            <person name="Davies P."/>
            <person name="de Pablos B."/>
            <person name="Delcher A."/>
            <person name="Deng Z."/>
            <person name="Mays A.D."/>
            <person name="Dew I."/>
            <person name="Dietz S.M."/>
            <person name="Dodson K."/>
            <person name="Doup L.E."/>
            <person name="Downes M."/>
            <person name="Dugan-Rocha S."/>
            <person name="Dunkov B.C."/>
            <person name="Dunn P."/>
            <person name="Durbin K.J."/>
            <person name="Evangelista C.C."/>
            <person name="Ferraz C."/>
            <person name="Ferriera S."/>
            <person name="Fleischmann W."/>
            <person name="Fosler C."/>
            <person name="Gabrielian A.E."/>
            <person name="Garg N.S."/>
            <person name="Gelbart W.M."/>
            <person name="Glasser K."/>
            <person name="Glodek A."/>
            <person name="Gong F."/>
            <person name="Gorrell J.H."/>
            <person name="Gu Z."/>
            <person name="Guan P."/>
            <person name="Harris M."/>
            <person name="Harris N.L."/>
            <person name="Harvey D.A."/>
            <person name="Heiman T.J."/>
            <person name="Hernandez J.R."/>
            <person name="Houck J."/>
            <person name="Hostin D."/>
            <person name="Houston K.A."/>
            <person name="Howland T.J."/>
            <person name="Wei M.-H."/>
            <person name="Ibegwam C."/>
            <person name="Jalali M."/>
            <person name="Kalush F."/>
            <person name="Karpen G.H."/>
            <person name="Ke Z."/>
            <person name="Kennison J.A."/>
            <person name="Ketchum K.A."/>
            <person name="Kimmel B.E."/>
            <person name="Kodira C.D."/>
            <person name="Kraft C.L."/>
            <person name="Kravitz S."/>
            <person name="Kulp D."/>
            <person name="Lai Z."/>
            <person name="Lasko P."/>
            <person name="Lei Y."/>
            <person name="Levitsky A.A."/>
            <person name="Li J.H."/>
            <person name="Li Z."/>
            <person name="Liang Y."/>
            <person name="Lin X."/>
            <person name="Liu X."/>
            <person name="Mattei B."/>
            <person name="McIntosh T.C."/>
            <person name="McLeod M.P."/>
            <person name="McPherson D."/>
            <person name="Merkulov G."/>
            <person name="Milshina N.V."/>
            <person name="Mobarry C."/>
            <person name="Morris J."/>
            <person name="Moshrefi A."/>
            <person name="Mount S.M."/>
            <person name="Moy M."/>
            <person name="Murphy B."/>
            <person name="Murphy L."/>
            <person name="Muzny D.M."/>
            <person name="Nelson D.L."/>
            <person name="Nelson D.R."/>
            <person name="Nelson K.A."/>
            <person name="Nixon K."/>
            <person name="Nusskern D.R."/>
            <person name="Pacleb J.M."/>
            <person name="Palazzolo M."/>
            <person name="Pittman G.S."/>
            <person name="Pan S."/>
            <person name="Pollard J."/>
            <person name="Puri V."/>
            <person name="Reese M.G."/>
            <person name="Reinert K."/>
            <person name="Remington K."/>
            <person name="Saunders R.D.C."/>
            <person name="Scheeler F."/>
            <person name="Shen H."/>
            <person name="Shue B.C."/>
            <person name="Siden-Kiamos I."/>
            <person name="Simpson M."/>
            <person name="Skupski M.P."/>
            <person name="Smith T.J."/>
            <person name="Spier E."/>
            <person name="Spradling A.C."/>
            <person name="Stapleton M."/>
            <person name="Strong R."/>
            <person name="Sun E."/>
            <person name="Svirskas R."/>
            <person name="Tector C."/>
            <person name="Turner R."/>
            <person name="Venter E."/>
            <person name="Wang A.H."/>
            <person name="Wang X."/>
            <person name="Wang Z.-Y."/>
            <person name="Wassarman D.A."/>
            <person name="Weinstock G.M."/>
            <person name="Weissenbach J."/>
            <person name="Williams S.M."/>
            <person name="Woodage T."/>
            <person name="Worley K.C."/>
            <person name="Wu D."/>
            <person name="Yang S."/>
            <person name="Yao Q.A."/>
            <person name="Ye J."/>
            <person name="Yeh R.-F."/>
            <person name="Zaveri J.S."/>
            <person name="Zhan M."/>
            <person name="Zhang G."/>
            <person name="Zhao Q."/>
            <person name="Zheng L."/>
            <person name="Zheng X.H."/>
            <person name="Zhong F.N."/>
            <person name="Zhong W."/>
            <person name="Zhou X."/>
            <person name="Zhu S.C."/>
            <person name="Zhu X."/>
            <person name="Smith H.O."/>
            <person name="Gibbs R.A."/>
            <person name="Myers E.W."/>
            <person name="Rubin G.M."/>
            <person name="Venter J.C."/>
        </authorList>
    </citation>
    <scope>NUCLEOTIDE SEQUENCE [LARGE SCALE GENOMIC DNA]</scope>
    <source>
        <strain>Berkeley</strain>
    </source>
</reference>
<reference key="3">
    <citation type="journal article" date="2002" name="Genome Biol.">
        <title>Annotation of the Drosophila melanogaster euchromatic genome: a systematic review.</title>
        <authorList>
            <person name="Misra S."/>
            <person name="Crosby M.A."/>
            <person name="Mungall C.J."/>
            <person name="Matthews B.B."/>
            <person name="Campbell K.S."/>
            <person name="Hradecky P."/>
            <person name="Huang Y."/>
            <person name="Kaminker J.S."/>
            <person name="Millburn G.H."/>
            <person name="Prochnik S.E."/>
            <person name="Smith C.D."/>
            <person name="Tupy J.L."/>
            <person name="Whitfield E.J."/>
            <person name="Bayraktaroglu L."/>
            <person name="Berman B.P."/>
            <person name="Bettencourt B.R."/>
            <person name="Celniker S.E."/>
            <person name="de Grey A.D.N.J."/>
            <person name="Drysdale R.A."/>
            <person name="Harris N.L."/>
            <person name="Richter J."/>
            <person name="Russo S."/>
            <person name="Schroeder A.J."/>
            <person name="Shu S.Q."/>
            <person name="Stapleton M."/>
            <person name="Yamada C."/>
            <person name="Ashburner M."/>
            <person name="Gelbart W.M."/>
            <person name="Rubin G.M."/>
            <person name="Lewis S.E."/>
        </authorList>
    </citation>
    <scope>GENOME REANNOTATION</scope>
    <scope>ALTERNATIVE SPLICING</scope>
    <source>
        <strain>Berkeley</strain>
    </source>
</reference>
<reference key="4">
    <citation type="journal article" date="2000" name="Science">
        <title>From sequence to chromosome: the tip of the X chromosome of D. melanogaster.</title>
        <authorList>
            <person name="Benos P.V."/>
            <person name="Gatt M.K."/>
            <person name="Ashburner M."/>
            <person name="Murphy L."/>
            <person name="Harris D."/>
            <person name="Barrell B.G."/>
            <person name="Ferraz C."/>
            <person name="Vidal S."/>
            <person name="Brun C."/>
            <person name="Demailles J."/>
            <person name="Cadieu E."/>
            <person name="Dreano S."/>
            <person name="Gloux S."/>
            <person name="Lelaure V."/>
            <person name="Mottier S."/>
            <person name="Galibert F."/>
            <person name="Borkova D."/>
            <person name="Minana B."/>
            <person name="Kafatos F.C."/>
            <person name="Louis C."/>
            <person name="Siden-Kiamos I."/>
            <person name="Bolshakov S."/>
            <person name="Papagiannakis G."/>
            <person name="Spanos L."/>
            <person name="Cox S."/>
            <person name="Madueno E."/>
            <person name="de Pablos B."/>
            <person name="Modolell J."/>
            <person name="Peter A."/>
            <person name="Schoettler P."/>
            <person name="Werner M."/>
            <person name="Mourkioti F."/>
            <person name="Beinert N."/>
            <person name="Dowe G."/>
            <person name="Schaefer U."/>
            <person name="Jaeckle H."/>
            <person name="Bucheton A."/>
            <person name="Callister D.M."/>
            <person name="Campbell L.A."/>
            <person name="Darlamitsou A."/>
            <person name="Henderson N.S."/>
            <person name="McMillan P.J."/>
            <person name="Salles C."/>
            <person name="Tait E.A."/>
            <person name="Valenti P."/>
            <person name="Saunders R.D.C."/>
            <person name="Glover D.M."/>
        </authorList>
    </citation>
    <scope>NUCLEOTIDE SEQUENCE [LARGE SCALE GENOMIC DNA]</scope>
    <source>
        <strain>Oregon-R</strain>
    </source>
</reference>
<reference evidence="19" key="5">
    <citation type="submission" date="2009-10" db="EMBL/GenBank/DDBJ databases">
        <authorList>
            <person name="Carlson J."/>
            <person name="Booth B."/>
            <person name="Frise E."/>
            <person name="Park S."/>
            <person name="Wan K."/>
            <person name="Yu C."/>
            <person name="Celniker S."/>
        </authorList>
    </citation>
    <scope>NUCLEOTIDE SEQUENCE [LARGE SCALE MRNA] (ISOFORM 7)</scope>
    <source>
        <strain evidence="19">Berkeley</strain>
    </source>
</reference>
<reference key="6">
    <citation type="submission" date="2009-11" db="EMBL/GenBank/DDBJ databases">
        <authorList>
            <person name="Stapleton M."/>
            <person name="Carlson J.W."/>
            <person name="Booth B."/>
            <person name="Frise E."/>
            <person name="Kapadia B."/>
            <person name="Park S."/>
            <person name="Wan K.H."/>
            <person name="Yu C."/>
            <person name="Celniker S.E."/>
        </authorList>
    </citation>
    <scope>NUCLEOTIDE SEQUENCE [LARGE SCALE MRNA] (ISOFORMS 5 AND 8)</scope>
    <source>
        <strain>Berkeley</strain>
        <tissue>Embryo</tissue>
    </source>
</reference>
<reference key="7">
    <citation type="journal article" date="1995" name="Proc. Natl. Acad. Sci. U.S.A.">
        <title>The silver gene of Drosophila melanogaster encodes multiple carboxypeptidases similar to mammalian prohormone-processing enzymes.</title>
        <authorList>
            <person name="Settle S.H. Jr."/>
            <person name="Green M.M."/>
            <person name="Burtis K.C."/>
        </authorList>
    </citation>
    <scope>NUCLEOTIDE SEQUENCE [MRNA] OF 1-1152 (ISOFORMS 1/5)</scope>
    <scope>NUCLEOTIDE SEQUENCE [MRNA] OF 93-152 (ISOFORMS 3/4/6)</scope>
    <source>
        <tissue>Embryo</tissue>
    </source>
</reference>
<reference key="8">
    <citation type="journal article" date="1994" name="Arch. Insect Biochem. Physiol.">
        <title>Molecular cloning of a Drosophila melanogaster gene coding for an homologue of human carboxypeptidase E.</title>
        <authorList>
            <person name="Bernasconi P."/>
        </authorList>
    </citation>
    <scope>NUCLEOTIDE SEQUENCE [GENOMIC DNA] OF 425-696</scope>
    <scope>DEVELOPMENTAL STAGE</scope>
    <source>
        <strain>Canton-S</strain>
    </source>
</reference>
<reference key="9">
    <citation type="journal article" date="2006" name="J. Biol. Chem.">
        <title>Characterization of the molecular basis of the Drosophila mutations in carboxypeptidase D. Effect on enzyme activity and expression.</title>
        <authorList>
            <person name="Sidyelyeva G."/>
            <person name="Baker N.E."/>
            <person name="Fricker L.D."/>
        </authorList>
    </citation>
    <scope>FUNCTION</scope>
    <scope>CATALYTIC ACTIVITY</scope>
    <scope>ACTIVITY REGULATION</scope>
    <scope>SUBCELLULAR LOCATION</scope>
    <scope>DEVELOPMENTAL STAGE</scope>
    <scope>DOMAIN</scope>
    <scope>DISRUPTION PHENOTYPE</scope>
    <scope>MUTAGENESIS OF 673-ALA--ALA-1406 AND LEU-803</scope>
</reference>
<reference key="10">
    <citation type="journal article" date="2006" name="J. Cell. Biochem.">
        <title>Drosophila S2 cells produce multiple forms of carboxypeptidase D with different intracellular distributions.</title>
        <authorList>
            <person name="Kalinina E."/>
            <person name="Fontenele-Neto J.D."/>
            <person name="Fricker L.D."/>
        </authorList>
    </citation>
    <scope>SUBCELLULAR LOCATION</scope>
    <scope>DOMAIN</scope>
    <scope>DEVELOPMENTAL STAGE</scope>
</reference>
<reference key="11">
    <citation type="journal article" date="2007" name="Glycobiology">
        <title>Identification of N-glycosylated proteins from the central nervous system of Drosophila melanogaster.</title>
        <authorList>
            <person name="Koles K."/>
            <person name="Lim J.-M."/>
            <person name="Aoki K."/>
            <person name="Porterfield M."/>
            <person name="Tiemeyer M."/>
            <person name="Wells L."/>
            <person name="Panin V."/>
        </authorList>
    </citation>
    <scope>GLYCOSYLATION [LARGE SCALE ANALYSIS] AT ASN-1251</scope>
    <scope>IDENTIFICATION BY MASS SPECTROMETRY</scope>
    <source>
        <strain>Oregon-R</strain>
        <tissue>Head</tissue>
    </source>
</reference>
<reference key="12">
    <citation type="journal article" date="2008" name="J. Proteome Res.">
        <title>Phosphoproteome analysis of Drosophila melanogaster embryos.</title>
        <authorList>
            <person name="Zhai B."/>
            <person name="Villen J."/>
            <person name="Beausoleil S.A."/>
            <person name="Mintseris J."/>
            <person name="Gygi S.P."/>
        </authorList>
    </citation>
    <scope>PHOSPHORYLATION [LARGE SCALE ANALYSIS] AT SER-1380</scope>
    <scope>IDENTIFICATION BY MASS SPECTROMETRY</scope>
    <source>
        <tissue>Embryo</tissue>
    </source>
</reference>
<reference key="13">
    <citation type="journal article" date="2010" name="Cell. Mol. Life Sci.">
        <title>Individual carboxypeptidase D domains have both redundant and unique functions in Drosophila development and behavior.</title>
        <authorList>
            <person name="Sidyelyeva G."/>
            <person name="Wegener C."/>
            <person name="Schoenfeld B.P."/>
            <person name="Bell A.J."/>
            <person name="Baker N.E."/>
            <person name="McBride S.M."/>
            <person name="Fricker L.D."/>
        </authorList>
    </citation>
    <scope>FUNCTION</scope>
    <scope>SUBCELLULAR LOCATION</scope>
    <scope>DOMAIN</scope>
    <scope>DISRUPTION PHENOTYPE</scope>
    <scope>MUTAGENESIS OF 673-ALA--ALA-1406 AND LEU-803</scope>
</reference>
<reference key="14">
    <citation type="journal article" date="2016" name="Protein Cell">
        <title>The carboxypeptidase D homolog silver regulates memory formation via insulin pathway in Drosophila.</title>
        <authorList>
            <person name="Lu B."/>
            <person name="Zhao Y."/>
            <person name="Zhao J."/>
            <person name="Yao X."/>
            <person name="Shuai Y."/>
            <person name="Ma W."/>
            <person name="Zhong Y."/>
        </authorList>
    </citation>
    <scope>FUNCTION</scope>
    <scope>TISSUE SPECIFICITY</scope>
</reference>
<reference key="15">
    <citation type="journal article" date="2019" name="Eur. J. Neurosci.">
        <title>Drosophila carboxypeptidase D (SILVER) is a key enzyme in neuropeptide processing required to maintain locomotor activity levels and survival rate.</title>
        <authorList>
            <person name="Pauls D."/>
            <person name="Hamarat Y."/>
            <person name="Trufasu L."/>
            <person name="Schendzielorz T.M."/>
            <person name="Gramlich G."/>
            <person name="Kahnt J."/>
            <person name="Vanselow J.T."/>
            <person name="Schlosser A."/>
            <person name="Wegener C."/>
        </authorList>
    </citation>
    <scope>FUNCTION</scope>
    <scope>CATALYTIC ACTIVITY</scope>
    <scope>TISSUE SPECIFICITY</scope>
</reference>
<reference evidence="21" key="16">
    <citation type="journal article" date="2010" name="J. Mol. Biol.">
        <title>Structure-function analysis of the short splicing variant carboxypeptidase encoded by Drosophila melanogaster silver.</title>
        <authorList>
            <person name="Tanco S."/>
            <person name="Arolas J.L."/>
            <person name="Guevara T."/>
            <person name="Lorenzo J."/>
            <person name="Aviles F.X."/>
            <person name="Gomis-Ruth F.X."/>
        </authorList>
    </citation>
    <scope>X-RAY CRYSTALLOGRAPHY (2.70 ANGSTROMS) OF ISOFORM 7 IN COMPLEX WITH ZN(2+) AND INHIBITOR</scope>
    <scope>FUNCTION</scope>
    <scope>CATALYTIC ACTIVITY</scope>
    <scope>SUBUNIT (ISOFORM 7)</scope>
    <scope>GLYCOSYLATION AT ASN-133</scope>
    <scope>COFACTOR</scope>
    <scope>DISULFIDE BONDS</scope>
</reference>
<evidence type="ECO:0000255" key="1"/>
<evidence type="ECO:0000255" key="2">
    <source>
        <dbReference type="PROSITE-ProRule" id="PRU00498"/>
    </source>
</evidence>
<evidence type="ECO:0000255" key="3">
    <source>
        <dbReference type="PROSITE-ProRule" id="PRU01379"/>
    </source>
</evidence>
<evidence type="ECO:0000269" key="4">
    <source>
    </source>
</evidence>
<evidence type="ECO:0000269" key="5">
    <source>
    </source>
</evidence>
<evidence type="ECO:0000269" key="6">
    <source>
    </source>
</evidence>
<evidence type="ECO:0000269" key="7">
    <source>
    </source>
</evidence>
<evidence type="ECO:0000269" key="8">
    <source>
    </source>
</evidence>
<evidence type="ECO:0000269" key="9">
    <source>
    </source>
</evidence>
<evidence type="ECO:0000269" key="10">
    <source>
    </source>
</evidence>
<evidence type="ECO:0000269" key="11">
    <source>
    </source>
</evidence>
<evidence type="ECO:0000269" key="12">
    <source>
    </source>
</evidence>
<evidence type="ECO:0000269" key="13">
    <source>
    </source>
</evidence>
<evidence type="ECO:0000303" key="14">
    <source>
    </source>
</evidence>
<evidence type="ECO:0000303" key="15">
    <source>
    </source>
</evidence>
<evidence type="ECO:0000303" key="16">
    <source ref="6"/>
</evidence>
<evidence type="ECO:0000305" key="17"/>
<evidence type="ECO:0000305" key="18">
    <source>
    </source>
</evidence>
<evidence type="ECO:0000312" key="19">
    <source>
        <dbReference type="EMBL" id="ACX61594.1"/>
    </source>
</evidence>
<evidence type="ECO:0000312" key="20">
    <source>
        <dbReference type="FlyBase" id="FBgn0004648"/>
    </source>
</evidence>
<evidence type="ECO:0007744" key="21">
    <source>
        <dbReference type="PDB" id="3MN8"/>
    </source>
</evidence>
<evidence type="ECO:0007829" key="22">
    <source>
        <dbReference type="PDB" id="3MN8"/>
    </source>
</evidence>
<protein>
    <recommendedName>
        <fullName evidence="14">Carboxypeptidase D</fullName>
        <ecNumber evidence="4 5 10 12">3.4.17.22</ecNumber>
    </recommendedName>
    <alternativeName>
        <fullName evidence="18">Metallocarboxypeptidase D</fullName>
    </alternativeName>
    <alternativeName>
        <fullName evidence="15">Protein silver</fullName>
    </alternativeName>
</protein>
<keyword id="KW-0002">3D-structure</keyword>
<keyword id="KW-0025">Alternative splicing</keyword>
<keyword id="KW-0121">Carboxypeptidase</keyword>
<keyword id="KW-0193">Cuticle</keyword>
<keyword id="KW-0963">Cytoplasm</keyword>
<keyword id="KW-1015">Disulfide bond</keyword>
<keyword id="KW-0325">Glycoprotein</keyword>
<keyword id="KW-0333">Golgi apparatus</keyword>
<keyword id="KW-0378">Hydrolase</keyword>
<keyword id="KW-0472">Membrane</keyword>
<keyword id="KW-0479">Metal-binding</keyword>
<keyword id="KW-0482">Metalloprotease</keyword>
<keyword id="KW-0597">Phosphoprotein</keyword>
<keyword id="KW-0645">Protease</keyword>
<keyword id="KW-1185">Reference proteome</keyword>
<keyword id="KW-0677">Repeat</keyword>
<keyword id="KW-0964">Secreted</keyword>
<keyword id="KW-0732">Signal</keyword>
<keyword id="KW-0812">Transmembrane</keyword>
<keyword id="KW-1133">Transmembrane helix</keyword>
<keyword id="KW-0862">Zinc</keyword>
<sequence length="1406" mass="158789">MPTLGLLFASIGIAVLAMGVPHCRGYTIKEDESFLQQPHYASQEQLEDLFAGLEKAYPNQAKVHFLGRSLEGRNLLALQISRNTRSRNLLTPPVKYIANMHGDETVGRQLLVYMAQYLLGNHERISDLGQLVNSTDIYLVPTMNPDGYALSQEGNCESLPNYVGRGNAANIDLNRDFPDRLEQSHVHQLRAQSRQPETAALVNWIVSKPFVLSANFHGGAVVASYPYDNSLAHNECCEESLTPDDRVFKQLAHTYSDNHPIMRKGNNCNDSFSGGITNGAHWYELSGGMQDFNYAFSNCFELTIELSCCKYPAASTLPQEWQRNKASLLQLLRQAHIGIKGLVTDASGFPIADANVYVAGLEEKPMRTSKRGEYWRLLTPGLYSVHASAFGYQTSAPQQVRVTNDNQEALRLDFKLAPVETNFDGNFRKVKVERSEPPQKLKKQFNGFLTPTKYEHHNFTAMESYLRAISSSYPSLTRLYSIGKSVQGRDLWVLEIFATPGSHVPGVPEFKYVANMHGNEVVGKELLLILTKYMLERYGNDDRITKLVNGTRMHFLYSMNPDGYEISIEGDRTGGVGRANAHGIDLNRNFPDQYGTDRFNKVTEPEVAAVMNWTLSLPFVLSANLHGGSLVANYPFDDNENDFNDPFMRLRNSSINGRKPNPTEDNALFKHLAGIYSNAHPTMYLGQPCELFQNEFFPDGITNGAQWYSVTGGMQDWNYVRAGCLELTIEMGCDKFPKAAELSRYWEDHREPLLQFIEQVHCGIHGFVHSTIGTPIAGAVVRLDGANHSTYSQVFGDYWKLALPGRHNLTVLGDNYAPLRMEVEVPDVHPFEMRMDITLMPDDPQHWASANDFRIIENVVNTRYHTNPQVRARLAELENQNGQIASFGYADSEFGTIFNYLKMTSDIGEPEEHKYKLLVVSSLYDTTAPLGREILLNLIRHLVEGFKLQDTSVVELLKRSVIYFLPQTSKFQNVFDMYNSNTSICDPVLGDELAERILGPETDQAKDVFLQFLRSERFDLMLTFGAGNSDLNYPKGDSVLVKFAHRMQRTEFNYSPLQCPPSATRQLHRETTERLTNMMYRIYNLPVYTLGISCCRMPHQKKIASVWRKNIDKIKNFLALVKTGVSGLVQNDKGQPLREAYVRLLEHDRIINVTKNVARFQLMLPHGLYGLEVTAPNYESQMIKVDVEDGRVTELGIIRMHPFTLIRGVVLELPNNDNRATTSIAGVVLDESNHPVRNAKVSVVGQTQLRNFTGSMGQYRISAVPLGTITLKVEAPRHLEATRQMHLIQGGLATENVVFHLKVNEHVFGLPRFLFILCASVLIIVGVIVCVLCAQFWFYRRHRGDKPYYNFSLLPQRGKEQFGLEDDDGGDDGETELFRSPIKRELSQRAHLVNNQTNYSFIIQAA</sequence>
<name>CBPD_DROME</name>
<accession>P42787</accession>
<accession>A2RVE4</accession>
<accession>B7Z112</accession>
<accession>C7LAH0</accession>
<accession>D0Z763</accession>
<accession>D3DME3</accession>
<accession>O46058</accession>
<accession>Q24094</accession>
<accession>Q24095</accession>
<accession>Q9W5F3</accession>
<accession>Q9W5F4</accession>
<accession>Q9W5F5</accession>
<comment type="function">
    <text evidence="4 5 9 10 11 12">Metallocarboxypeptidase that catalyzes the release of C-terminal arginine or lysine residues from peptides and proteins (PubMed:12393882, PubMed:16556608, PubMed:20386952, PubMed:20600119, PubMed:31309630). Functionally important for processing a broad range of proteins including growth factors, peptide hormones (such as Akh) and neuropeptides (PubMed:16556608, PubMed:20386952, PubMed:20600119, PubMed:27430952, PubMed:31309630). Consequently, it is involved in a wide range of processes including viability, memory formation, locomotive activity, wing formation, and peptide-regulated behaviors such as starvation-induced hyperactivity, appetitive gustatory preference, and cold and ethanol sensitivity (PubMed:20386952, PubMed:20600119, PubMed:27430952, PubMed:31309630). Key enzyme in neuropeptide processing (PubMed:31309630). Involved in regulation of memory formation, possibly via the insulin pathway in neurosecretory cells (PubMed:27430952).</text>
</comment>
<comment type="catalytic activity">
    <reaction evidence="4 5 10 12">
        <text>Releases C-terminal Arg and Lys from polypeptides.</text>
        <dbReference type="EC" id="3.4.17.22"/>
    </reaction>
</comment>
<comment type="cofactor">
    <cofactor evidence="10">
        <name>Zn(2+)</name>
        <dbReference type="ChEBI" id="CHEBI:29105"/>
    </cofactor>
</comment>
<comment type="activity regulation">
    <text evidence="5">Inhibited by 2-guanidinoethylmercaptosuccinic acid (GEMSA).</text>
</comment>
<comment type="biophysicochemical properties">
    <phDependence>
        <text evidence="4">Optimum pH is between 7-8 for the active carboxypeptidase-like domain 1, and 5-6.5 for domain 2.</text>
    </phDependence>
</comment>
<comment type="subunit">
    <molecule>Isoform 7</molecule>
    <text evidence="10">Monomer.</text>
</comment>
<comment type="subcellular location">
    <subcellularLocation>
        <location evidence="5 6">Membrane</location>
        <topology evidence="17">Single-pass type I membrane protein</topology>
    </subcellularLocation>
    <subcellularLocation>
        <location evidence="9">Cytoplasm</location>
        <location evidence="9">Perinuclear region</location>
    </subcellularLocation>
    <subcellularLocation>
        <location evidence="6">Golgi apparatus</location>
        <location evidence="6">trans-Golgi network</location>
    </subcellularLocation>
    <text evidence="6">Long isoforms, that contain a transmembrane domain, are associated with membranes (PubMed:16676361). Isoforms 4, 5 and 6 also appear to undergo retrograde transport from the cell membrane to the trans-Golgi network (PubMed:16676361). The short isoforms (isoforms 6 and 7) that lack the transmembrane domain are secreted (PubMed:16676361).</text>
</comment>
<comment type="subcellular location">
    <molecule>Isoform 6</molecule>
    <subcellularLocation>
        <location evidence="6">Secreted</location>
    </subcellularLocation>
</comment>
<comment type="subcellular location">
    <molecule>Isoform 7</molecule>
    <subcellularLocation>
        <location evidence="6">Secreted</location>
    </subcellularLocation>
</comment>
<comment type="alternative products">
    <event type="alternative splicing"/>
    <isoform>
        <id>P42787-1</id>
        <name>1</name>
        <name>B</name>
        <name>1B long tail-1</name>
        <sequence type="displayed"/>
    </isoform>
    <isoform>
        <id>P42787-2</id>
        <name>2</name>
        <name>C</name>
        <sequence type="described" ref="VSP_037495"/>
    </isoform>
    <isoform>
        <id>P42787-3</id>
        <name>3</name>
        <name>1A long tail-1</name>
        <name>D</name>
        <sequence type="described" ref="VSP_000773"/>
    </isoform>
    <isoform>
        <id>P42787-4</id>
        <name>4</name>
        <name>H</name>
        <sequence type="described" ref="VSP_000773 VSP_000779"/>
    </isoform>
    <isoform>
        <id>P42787-5</id>
        <name>5</name>
        <name>1B long tail-2</name>
        <name>G</name>
        <sequence type="described" ref="VSP_000779"/>
    </isoform>
    <isoform>
        <id>P42787-6</id>
        <name>6</name>
        <name>1A short</name>
        <name>E</name>
        <sequence type="described" ref="VSP_000773 VSP_000775 VSP_000776"/>
    </isoform>
    <isoform>
        <id>P42787-7</id>
        <name>7</name>
        <name>1B short</name>
        <name>F</name>
        <sequence type="described" ref="VSP_000775 VSP_000776"/>
    </isoform>
    <isoform>
        <id>P42787-8</id>
        <name>8</name>
        <name>G</name>
        <name>I</name>
        <sequence type="described" ref="VSP_037495 VSP_000779"/>
    </isoform>
</comment>
<comment type="tissue specificity">
    <text evidence="11 12">Expressed in the central nervous system (CNS) of adults and larvae (PubMed:31309630). In the adult brain, increased levels of expression in the mushroom body (MB) and neurosecretory cells (PubMed:27430952).</text>
</comment>
<comment type="developmental stage">
    <text evidence="5 6 13">Embryonic and adult stages (PubMed:16556608, PubMed:16676361, PubMed:8000074). Also detected in larvae (PubMed:16556608).</text>
</comment>
<comment type="domain">
    <text evidence="4 5 9">There are 3 carboxypeptidase-like domains (PubMed:12393882, PubMed:20386952). Only the first two domains seem to have catalytic activity (PubMed:12393882, PubMed:16556608, PubMed:20386952). However, in svr proteins there are two alternative carboxypeptidase-like 1 domains (CP-1), a catalytically inactive 1A form (in isoforms 3, 4 and 6) and an active 1B form (in isoforms 1, 5, and 7) (PubMed:12393882). All 3 carboxypeptidase-like domains (active CP-1, CP-2 and CP-3) appear to necessary for maintaining full viability (PubMed:20386952). The active CP-1 and CP-2 domains display redundant functions in terms of processing peptides involved in viability, and in behaviors like cold and ethanol sensitivity, as well as long-term memory (PubMed:20386952). However, the active CP-1 domain appears to preferentially remove C-terminal Arg residues while CP-2 preferentially removes C-terminal Lys residues (PubMed:20386952). The active CP-1 is sufficient for survival (PubMed:16556608). The CP-3 domain appears to be important for development from embryo to adult (PubMed:20386952).</text>
</comment>
<comment type="domain">
    <text evidence="6">The C-terminus in isoforms 4, 5 and 6 may be required for the retrograde transport of these proteins from the cell membrane to the trans-Golgi network.</text>
</comment>
<comment type="disruption phenotype">
    <text evidence="5 9">Larvae lethal (PubMed:16556608, PubMed:20386952). Larvae die around the first molt at the first or second instar stage (PubMed:16556608).</text>
</comment>
<comment type="miscellaneous">
    <text evidence="15">Named 'silver' because mutants form cuticular structures that are pale and silvery in color due to reduced melanization.</text>
</comment>
<comment type="similarity">
    <text evidence="17">Belongs to the peptidase M14 family.</text>
</comment>
<comment type="sequence caution" evidence="17">
    <conflict type="frameshift">
        <sequence resource="EMBL-CDS" id="AAA91650"/>
    </conflict>
</comment>
<comment type="sequence caution" evidence="17">
    <conflict type="miscellaneous discrepancy">
        <sequence resource="EMBL-CDS" id="AAC46486"/>
    </conflict>
    <text>Intron retention.</text>
</comment>
<proteinExistence type="evidence at protein level"/>